<sequence length="179" mass="20993">MTRQRIAIDMDEVLADTLGAVVKAVNERADLNIKMESLNGKKLKHMIPEHEGLVMDILKEPGFFRNLDVMPHAQEVVKQLNEHYDIYIATAAMDVPTSFHDKYEWLLEYFPFLDPQHFVFCGRKNIILADYLIDDNPKQLEIFEGKSIMFTASHNVYEHRFERVSGWRDVKNYFNSIEK</sequence>
<proteinExistence type="evidence at protein level"/>
<feature type="chain" id="PRO_0000164386" description="Putative 5'(3')-deoxyribonucleotidase">
    <location>
        <begin position="1"/>
        <end position="179"/>
    </location>
</feature>
<feature type="active site" description="Nucleophile" evidence="2">
    <location>
        <position position="9"/>
    </location>
</feature>
<feature type="active site" description="Proton donor" evidence="2">
    <location>
        <position position="11"/>
    </location>
</feature>
<feature type="binding site" evidence="3">
    <location>
        <position position="9"/>
    </location>
    <ligand>
        <name>Mg(2+)</name>
        <dbReference type="ChEBI" id="CHEBI:18420"/>
    </ligand>
</feature>
<feature type="binding site" evidence="3">
    <location>
        <position position="11"/>
    </location>
    <ligand>
        <name>Mg(2+)</name>
        <dbReference type="ChEBI" id="CHEBI:18420"/>
    </ligand>
</feature>
<feature type="binding site" evidence="3">
    <location>
        <position position="135"/>
    </location>
    <ligand>
        <name>Mg(2+)</name>
        <dbReference type="ChEBI" id="CHEBI:18420"/>
    </ligand>
</feature>
<feature type="strand" evidence="4">
    <location>
        <begin position="5"/>
        <end position="9"/>
    </location>
</feature>
<feature type="turn" evidence="4">
    <location>
        <begin position="12"/>
        <end position="14"/>
    </location>
</feature>
<feature type="helix" evidence="4">
    <location>
        <begin position="17"/>
        <end position="28"/>
    </location>
</feature>
<feature type="helix" evidence="4">
    <location>
        <begin position="35"/>
        <end position="37"/>
    </location>
</feature>
<feature type="helix" evidence="4">
    <location>
        <begin position="53"/>
        <end position="59"/>
    </location>
</feature>
<feature type="helix" evidence="4">
    <location>
        <begin position="63"/>
        <end position="65"/>
    </location>
</feature>
<feature type="helix" evidence="4">
    <location>
        <begin position="73"/>
        <end position="80"/>
    </location>
</feature>
<feature type="turn" evidence="4">
    <location>
        <begin position="81"/>
        <end position="83"/>
    </location>
</feature>
<feature type="strand" evidence="4">
    <location>
        <begin position="84"/>
        <end position="90"/>
    </location>
</feature>
<feature type="helix" evidence="4">
    <location>
        <begin position="98"/>
        <end position="109"/>
    </location>
</feature>
<feature type="helix" evidence="4">
    <location>
        <begin position="115"/>
        <end position="117"/>
    </location>
</feature>
<feature type="strand" evidence="4">
    <location>
        <begin position="118"/>
        <end position="120"/>
    </location>
</feature>
<feature type="helix" evidence="4">
    <location>
        <begin position="124"/>
        <end position="126"/>
    </location>
</feature>
<feature type="strand" evidence="4">
    <location>
        <begin position="130"/>
        <end position="135"/>
    </location>
</feature>
<feature type="helix" evidence="4">
    <location>
        <begin position="137"/>
        <end position="142"/>
    </location>
</feature>
<feature type="strand" evidence="4">
    <location>
        <begin position="144"/>
        <end position="150"/>
    </location>
</feature>
<feature type="helix" evidence="4">
    <location>
        <begin position="153"/>
        <end position="155"/>
    </location>
</feature>
<feature type="strand" evidence="4">
    <location>
        <begin position="160"/>
        <end position="164"/>
    </location>
</feature>
<feature type="helix" evidence="4">
    <location>
        <begin position="167"/>
        <end position="177"/>
    </location>
</feature>
<name>53DR_STAES</name>
<reference key="1">
    <citation type="journal article" date="2003" name="Mol. Microbiol.">
        <title>Genome-based analysis of virulence genes in a non-biofilm-forming Staphylococcus epidermidis strain (ATCC 12228).</title>
        <authorList>
            <person name="Zhang Y.-Q."/>
            <person name="Ren S.-X."/>
            <person name="Li H.-L."/>
            <person name="Wang Y.-X."/>
            <person name="Fu G."/>
            <person name="Yang J."/>
            <person name="Qin Z.-Q."/>
            <person name="Miao Y.-G."/>
            <person name="Wang W.-Y."/>
            <person name="Chen R.-S."/>
            <person name="Shen Y."/>
            <person name="Chen Z."/>
            <person name="Yuan Z.-H."/>
            <person name="Zhao G.-P."/>
            <person name="Qu D."/>
            <person name="Danchin A."/>
            <person name="Wen Y.-M."/>
        </authorList>
    </citation>
    <scope>NUCLEOTIDE SEQUENCE [LARGE SCALE GENOMIC DNA]</scope>
    <source>
        <strain>ATCC 12228 / FDA PCI 1200</strain>
    </source>
</reference>
<keyword id="KW-0002">3D-structure</keyword>
<keyword id="KW-0378">Hydrolase</keyword>
<keyword id="KW-0460">Magnesium</keyword>
<keyword id="KW-0479">Metal-binding</keyword>
<protein>
    <recommendedName>
        <fullName>Putative 5'(3')-deoxyribonucleotidase</fullName>
        <ecNumber>3.1.3.-</ecNumber>
    </recommendedName>
</protein>
<gene>
    <name type="ordered locus">SE_0505</name>
</gene>
<dbReference type="EC" id="3.1.3.-"/>
<dbReference type="EMBL" id="AE015929">
    <property type="protein sequence ID" value="AAO04102.1"/>
    <property type="molecule type" value="Genomic_DNA"/>
</dbReference>
<dbReference type="RefSeq" id="NP_764060.1">
    <property type="nucleotide sequence ID" value="NC_004461.1"/>
</dbReference>
<dbReference type="RefSeq" id="WP_002468869.1">
    <property type="nucleotide sequence ID" value="NZ_WBME01000015.1"/>
</dbReference>
<dbReference type="PDB" id="3BWV">
    <property type="method" value="X-ray"/>
    <property type="resolution" value="1.55 A"/>
    <property type="chains" value="A/B=1-179"/>
</dbReference>
<dbReference type="PDBsum" id="3BWV"/>
<dbReference type="SMR" id="Q8CTG7"/>
<dbReference type="DNASU" id="1056034"/>
<dbReference type="KEGG" id="sep:SE_0505"/>
<dbReference type="PATRIC" id="fig|176280.10.peg.477"/>
<dbReference type="eggNOG" id="COG4502">
    <property type="taxonomic scope" value="Bacteria"/>
</dbReference>
<dbReference type="HOGENOM" id="CLU_111510_0_0_9"/>
<dbReference type="OrthoDB" id="278110at2"/>
<dbReference type="EvolutionaryTrace" id="Q8CTG7"/>
<dbReference type="Proteomes" id="UP000001411">
    <property type="component" value="Chromosome"/>
</dbReference>
<dbReference type="GO" id="GO:0008253">
    <property type="term" value="F:5'-nucleotidase activity"/>
    <property type="evidence" value="ECO:0007669"/>
    <property type="project" value="InterPro"/>
</dbReference>
<dbReference type="GO" id="GO:0046872">
    <property type="term" value="F:metal ion binding"/>
    <property type="evidence" value="ECO:0007669"/>
    <property type="project" value="UniProtKB-KW"/>
</dbReference>
<dbReference type="GO" id="GO:0009223">
    <property type="term" value="P:pyrimidine deoxyribonucleotide catabolic process"/>
    <property type="evidence" value="ECO:0007669"/>
    <property type="project" value="TreeGrafter"/>
</dbReference>
<dbReference type="CDD" id="cd02587">
    <property type="entry name" value="HAD_5-3dNT"/>
    <property type="match status" value="1"/>
</dbReference>
<dbReference type="Gene3D" id="1.10.40.40">
    <property type="entry name" value="Deoxyribonucleotidase, domain 2"/>
    <property type="match status" value="1"/>
</dbReference>
<dbReference type="Gene3D" id="3.40.50.1000">
    <property type="entry name" value="HAD superfamily/HAD-like"/>
    <property type="match status" value="1"/>
</dbReference>
<dbReference type="InterPro" id="IPR010708">
    <property type="entry name" value="5'(3')-deoxyribonucleotidase"/>
</dbReference>
<dbReference type="InterPro" id="IPR036412">
    <property type="entry name" value="HAD-like_sf"/>
</dbReference>
<dbReference type="InterPro" id="IPR023214">
    <property type="entry name" value="HAD_sf"/>
</dbReference>
<dbReference type="PANTHER" id="PTHR16504">
    <property type="entry name" value="5'(3')-DEOXYRIBONUCLEOTIDASE"/>
    <property type="match status" value="1"/>
</dbReference>
<dbReference type="PANTHER" id="PTHR16504:SF4">
    <property type="entry name" value="5'(3')-DEOXYRIBONUCLEOTIDASE"/>
    <property type="match status" value="1"/>
</dbReference>
<dbReference type="Pfam" id="PF06941">
    <property type="entry name" value="NT5C"/>
    <property type="match status" value="1"/>
</dbReference>
<dbReference type="SFLD" id="SFLDG01146">
    <property type="entry name" value="C1.2.2"/>
    <property type="match status" value="1"/>
</dbReference>
<dbReference type="SFLD" id="SFLDS00003">
    <property type="entry name" value="Haloacid_Dehalogenase"/>
    <property type="match status" value="1"/>
</dbReference>
<dbReference type="SUPFAM" id="SSF56784">
    <property type="entry name" value="HAD-like"/>
    <property type="match status" value="1"/>
</dbReference>
<comment type="function">
    <text evidence="2">Dephosphorylates the 5' and 2'(3')-phosphates of deoxyribonucleotides.</text>
</comment>
<comment type="cofactor">
    <cofactor evidence="1">
        <name>Mg(2+)</name>
        <dbReference type="ChEBI" id="CHEBI:18420"/>
    </cofactor>
</comment>
<comment type="similarity">
    <text evidence="2">Belongs to the 5'(3')-deoxyribonucleotidase family.</text>
</comment>
<accession>Q8CTG7</accession>
<organism>
    <name type="scientific">Staphylococcus epidermidis (strain ATCC 12228 / FDA PCI 1200)</name>
    <dbReference type="NCBI Taxonomy" id="176280"/>
    <lineage>
        <taxon>Bacteria</taxon>
        <taxon>Bacillati</taxon>
        <taxon>Bacillota</taxon>
        <taxon>Bacilli</taxon>
        <taxon>Bacillales</taxon>
        <taxon>Staphylococcaceae</taxon>
        <taxon>Staphylococcus</taxon>
    </lineage>
</organism>
<evidence type="ECO:0000250" key="1">
    <source>
        <dbReference type="UniProtKB" id="Q97JQ5"/>
    </source>
</evidence>
<evidence type="ECO:0000305" key="2"/>
<evidence type="ECO:0007744" key="3">
    <source>
        <dbReference type="PDB" id="3BWV"/>
    </source>
</evidence>
<evidence type="ECO:0007829" key="4">
    <source>
        <dbReference type="PDB" id="3BWV"/>
    </source>
</evidence>